<proteinExistence type="inferred from homology"/>
<accession>A2BYH7</accession>
<name>ATPD_PROM5</name>
<protein>
    <recommendedName>
        <fullName evidence="1">ATP synthase subunit delta</fullName>
    </recommendedName>
    <alternativeName>
        <fullName evidence="1">ATP synthase F(1) sector subunit delta</fullName>
    </alternativeName>
    <alternativeName>
        <fullName evidence="1">F-type ATPase subunit delta</fullName>
        <shortName evidence="1">F-ATPase subunit delta</shortName>
    </alternativeName>
</protein>
<organism>
    <name type="scientific">Prochlorococcus marinus (strain MIT 9515)</name>
    <dbReference type="NCBI Taxonomy" id="167542"/>
    <lineage>
        <taxon>Bacteria</taxon>
        <taxon>Bacillati</taxon>
        <taxon>Cyanobacteriota</taxon>
        <taxon>Cyanophyceae</taxon>
        <taxon>Synechococcales</taxon>
        <taxon>Prochlorococcaceae</taxon>
        <taxon>Prochlorococcus</taxon>
    </lineage>
</organism>
<keyword id="KW-0066">ATP synthesis</keyword>
<keyword id="KW-0139">CF(1)</keyword>
<keyword id="KW-0375">Hydrogen ion transport</keyword>
<keyword id="KW-0406">Ion transport</keyword>
<keyword id="KW-0472">Membrane</keyword>
<keyword id="KW-0793">Thylakoid</keyword>
<keyword id="KW-0813">Transport</keyword>
<dbReference type="EMBL" id="CP000552">
    <property type="protein sequence ID" value="ABM72838.1"/>
    <property type="molecule type" value="Genomic_DNA"/>
</dbReference>
<dbReference type="RefSeq" id="WP_011820933.1">
    <property type="nucleotide sequence ID" value="NC_008817.1"/>
</dbReference>
<dbReference type="SMR" id="A2BYH7"/>
<dbReference type="STRING" id="167542.P9515_16311"/>
<dbReference type="GeneID" id="60200986"/>
<dbReference type="KEGG" id="pmc:P9515_16311"/>
<dbReference type="eggNOG" id="COG0712">
    <property type="taxonomic scope" value="Bacteria"/>
</dbReference>
<dbReference type="HOGENOM" id="CLU_085114_1_1_3"/>
<dbReference type="OrthoDB" id="9802471at2"/>
<dbReference type="Proteomes" id="UP000001589">
    <property type="component" value="Chromosome"/>
</dbReference>
<dbReference type="GO" id="GO:0031676">
    <property type="term" value="C:plasma membrane-derived thylakoid membrane"/>
    <property type="evidence" value="ECO:0007669"/>
    <property type="project" value="UniProtKB-SubCell"/>
</dbReference>
<dbReference type="GO" id="GO:0045259">
    <property type="term" value="C:proton-transporting ATP synthase complex"/>
    <property type="evidence" value="ECO:0007669"/>
    <property type="project" value="UniProtKB-KW"/>
</dbReference>
<dbReference type="GO" id="GO:0046933">
    <property type="term" value="F:proton-transporting ATP synthase activity, rotational mechanism"/>
    <property type="evidence" value="ECO:0007669"/>
    <property type="project" value="UniProtKB-UniRule"/>
</dbReference>
<dbReference type="Gene3D" id="1.10.520.20">
    <property type="entry name" value="N-terminal domain of the delta subunit of the F1F0-ATP synthase"/>
    <property type="match status" value="1"/>
</dbReference>
<dbReference type="HAMAP" id="MF_01416">
    <property type="entry name" value="ATP_synth_delta_bact"/>
    <property type="match status" value="1"/>
</dbReference>
<dbReference type="InterPro" id="IPR026015">
    <property type="entry name" value="ATP_synth_OSCP/delta_N_sf"/>
</dbReference>
<dbReference type="InterPro" id="IPR000711">
    <property type="entry name" value="ATPase_OSCP/dsu"/>
</dbReference>
<dbReference type="NCBIfam" id="TIGR01145">
    <property type="entry name" value="ATP_synt_delta"/>
    <property type="match status" value="1"/>
</dbReference>
<dbReference type="PANTHER" id="PTHR11910">
    <property type="entry name" value="ATP SYNTHASE DELTA CHAIN"/>
    <property type="match status" value="1"/>
</dbReference>
<dbReference type="Pfam" id="PF00213">
    <property type="entry name" value="OSCP"/>
    <property type="match status" value="1"/>
</dbReference>
<dbReference type="PRINTS" id="PR00125">
    <property type="entry name" value="ATPASEDELTA"/>
</dbReference>
<dbReference type="SUPFAM" id="SSF47928">
    <property type="entry name" value="N-terminal domain of the delta subunit of the F1F0-ATP synthase"/>
    <property type="match status" value="1"/>
</dbReference>
<gene>
    <name evidence="1" type="primary">atpH</name>
    <name evidence="1" type="synonym">atpD</name>
    <name type="ordered locus">P9515_16311</name>
</gene>
<evidence type="ECO:0000255" key="1">
    <source>
        <dbReference type="HAMAP-Rule" id="MF_01416"/>
    </source>
</evidence>
<sequence length="180" mass="19780">MPLLNSVTTPYAEALLQVVNENDQTEEMVNEVKQLLTLINDAPELEKTLSSPVLETETKRKIIIEIFSDRINSSLLNFLKLLADRQRIGIVTSILNRFLEIHRENSNIALATVTSAVELTDDQKGLITKKIINIAGTEKLELVTKIDPSLIGGFVASVGSKVIDASLASQIRKLGLSLSK</sequence>
<comment type="function">
    <text evidence="1">F(1)F(0) ATP synthase produces ATP from ADP in the presence of a proton or sodium gradient. F-type ATPases consist of two structural domains, F(1) containing the extramembraneous catalytic core and F(0) containing the membrane proton channel, linked together by a central stalk and a peripheral stalk. During catalysis, ATP synthesis in the catalytic domain of F(1) is coupled via a rotary mechanism of the central stalk subunits to proton translocation.</text>
</comment>
<comment type="function">
    <text evidence="1">This protein is part of the stalk that links CF(0) to CF(1). It either transmits conformational changes from CF(0) to CF(1) or is implicated in proton conduction.</text>
</comment>
<comment type="subunit">
    <text evidence="1">F-type ATPases have 2 components, F(1) - the catalytic core - and F(0) - the membrane proton channel. F(1) has five subunits: alpha(3), beta(3), gamma(1), delta(1), epsilon(1). CF(0) has four main subunits: a(1), b(1), b'(1) and c(10-14). The alpha and beta chains form an alternating ring which encloses part of the gamma chain. F(1) is attached to F(0) by a central stalk formed by the gamma and epsilon chains, while a peripheral stalk is formed by the delta, b and b' chains.</text>
</comment>
<comment type="subcellular location">
    <subcellularLocation>
        <location evidence="1">Cellular thylakoid membrane</location>
        <topology evidence="1">Peripheral membrane protein</topology>
    </subcellularLocation>
</comment>
<comment type="similarity">
    <text evidence="1">Belongs to the ATPase delta chain family.</text>
</comment>
<reference key="1">
    <citation type="journal article" date="2007" name="PLoS Genet.">
        <title>Patterns and implications of gene gain and loss in the evolution of Prochlorococcus.</title>
        <authorList>
            <person name="Kettler G.C."/>
            <person name="Martiny A.C."/>
            <person name="Huang K."/>
            <person name="Zucker J."/>
            <person name="Coleman M.L."/>
            <person name="Rodrigue S."/>
            <person name="Chen F."/>
            <person name="Lapidus A."/>
            <person name="Ferriera S."/>
            <person name="Johnson J."/>
            <person name="Steglich C."/>
            <person name="Church G.M."/>
            <person name="Richardson P."/>
            <person name="Chisholm S.W."/>
        </authorList>
    </citation>
    <scope>NUCLEOTIDE SEQUENCE [LARGE SCALE GENOMIC DNA]</scope>
    <source>
        <strain>MIT 9515</strain>
    </source>
</reference>
<feature type="chain" id="PRO_0000371067" description="ATP synthase subunit delta">
    <location>
        <begin position="1"/>
        <end position="180"/>
    </location>
</feature>